<gene>
    <name evidence="6" type="ORF">PBANKA_0813300</name>
</gene>
<proteinExistence type="evidence at protein level"/>
<comment type="function">
    <text evidence="3">Plays a role in gamete fertilization (PubMed:37774810). Required for the successful transmission of parasites to mosquito (PubMed:37774810).</text>
</comment>
<comment type="subcellular location">
    <subcellularLocation>
        <location evidence="3">Cell projection</location>
        <location evidence="3">Cilium</location>
        <location evidence="3">Flagellum</location>
    </subcellularLocation>
    <subcellularLocation>
        <location evidence="3">Cell membrane</location>
        <topology evidence="1">Multi-pass membrane protein</topology>
    </subcellularLocation>
    <text evidence="3">In male gametes, localizes to the flagella and residual body; in female gametes, localizes to the plasma membrane. In ookinetes, localizes to the plasma membrane.</text>
</comment>
<comment type="developmental stage">
    <text evidence="3">Expressed in zygotes and ookinetes (at protein level) (PubMed:37774810). Not detected in schizonts or gametocytes (at protein level) (PubMed:37774810). Despite the abundance of transcripts in gametocytes, protein is not detected at this stage, suggesting that expression is translationally repressed in gametocytes and begins after gametocyte activation (PubMed:37774810).</text>
</comment>
<comment type="disruption phenotype">
    <text evidence="3">Gene deletion results in fertilization defects affecting both male and female gametes (PubMed:37774810). Fewer zygotes formed and ookinetes developed (PubMed:37774810). Lower infection prevalence and fewer oocysts per midgut in Anopheles stephensi mosquitoes after infectious blood meal (PubMed:37774810). Does not affect asexual erythrocytic cycle (PubMed:37774810). Does not affect virulence in mice (PubMed:37774810). Does not affect gametocytemia and sex ratio (female/male) (PubMed:37774810). Does not affect gametogenesis (PubMed:37774810).</text>
</comment>
<feature type="chain" id="PRO_0000461596" description="Membrane protein Pbs54">
    <location>
        <begin position="1"/>
        <end position="455"/>
    </location>
</feature>
<feature type="transmembrane region" description="Helical" evidence="1">
    <location>
        <begin position="12"/>
        <end position="32"/>
    </location>
</feature>
<feature type="transmembrane region" description="Helical" evidence="1">
    <location>
        <begin position="181"/>
        <end position="201"/>
    </location>
</feature>
<feature type="transmembrane region" description="Helical" evidence="1">
    <location>
        <begin position="220"/>
        <end position="240"/>
    </location>
</feature>
<feature type="transmembrane region" description="Helical" evidence="1">
    <location>
        <begin position="244"/>
        <end position="264"/>
    </location>
</feature>
<feature type="transmembrane region" description="Helical" evidence="1">
    <location>
        <begin position="285"/>
        <end position="305"/>
    </location>
</feature>
<feature type="transmembrane region" description="Helical" evidence="1">
    <location>
        <begin position="312"/>
        <end position="332"/>
    </location>
</feature>
<feature type="transmembrane region" description="Helical" evidence="1">
    <location>
        <begin position="346"/>
        <end position="366"/>
    </location>
</feature>
<feature type="transmembrane region" description="Helical" evidence="1">
    <location>
        <begin position="398"/>
        <end position="418"/>
    </location>
</feature>
<feature type="glycosylation site" description="N-linked (GlcNAc...) asparagine" evidence="2">
    <location>
        <position position="41"/>
    </location>
</feature>
<feature type="glycosylation site" description="N-linked (GlcNAc...) asparagine" evidence="2">
    <location>
        <position position="102"/>
    </location>
</feature>
<feature type="glycosylation site" description="N-linked (GlcNAc...) asparagine" evidence="2">
    <location>
        <position position="125"/>
    </location>
</feature>
<feature type="glycosylation site" description="N-linked (GlcNAc...) asparagine" evidence="2">
    <location>
        <position position="373"/>
    </location>
</feature>
<organism evidence="7">
    <name type="scientific">Plasmodium berghei (strain Anka)</name>
    <dbReference type="NCBI Taxonomy" id="5823"/>
    <lineage>
        <taxon>Eukaryota</taxon>
        <taxon>Sar</taxon>
        <taxon>Alveolata</taxon>
        <taxon>Apicomplexa</taxon>
        <taxon>Aconoidasida</taxon>
        <taxon>Haemosporida</taxon>
        <taxon>Plasmodiidae</taxon>
        <taxon>Plasmodium</taxon>
        <taxon>Plasmodium (Vinckeia)</taxon>
    </lineage>
</organism>
<protein>
    <recommendedName>
        <fullName evidence="4">Membrane protein Pbs54</fullName>
        <shortName evidence="4">Pbs54</shortName>
    </recommendedName>
</protein>
<reference evidence="7" key="1">
    <citation type="journal article" date="2014" name="BMC Biol.">
        <title>A comprehensive evaluation of rodent malaria parasite genomes and gene expression.</title>
        <authorList>
            <person name="Otto T.D."/>
            <person name="Bohme U."/>
            <person name="Jackson A.P."/>
            <person name="Hunt M."/>
            <person name="Franke-Fayard B."/>
            <person name="Hoeijmakers W.A."/>
            <person name="Religa A.A."/>
            <person name="Robertson L."/>
            <person name="Sanders M."/>
            <person name="Ogun S.A."/>
            <person name="Cunningham D."/>
            <person name="Erhart A."/>
            <person name="Billker O."/>
            <person name="Khan S.M."/>
            <person name="Stunnenberg H.G."/>
            <person name="Langhorne J."/>
            <person name="Holder A.A."/>
            <person name="Waters A.P."/>
            <person name="Newbold C.I."/>
            <person name="Pain A."/>
            <person name="Berriman M."/>
            <person name="Janse C.J."/>
        </authorList>
    </citation>
    <scope>NUCLEOTIDE SEQUENCE [LARGE SCALE GENOMIC DNA]</scope>
    <source>
        <strain evidence="7">ANKA</strain>
    </source>
</reference>
<reference evidence="5" key="2">
    <citation type="journal article" date="2024" name="Int. J. Parasitol.">
        <title>Functional characterization of a conserved membrane protein, Pbs54, involved in gamete fertilization in Plasmodium berghei.</title>
        <authorList>
            <person name="Pang W."/>
            <person name="Bai J."/>
            <person name="Zhu L."/>
            <person name="Liu F."/>
            <person name="Wu Y."/>
            <person name="Yang F."/>
            <person name="Zheng L."/>
            <person name="Liu P."/>
            <person name="Zhang Y."/>
            <person name="Wang M."/>
            <person name="Li J."/>
            <person name="Zhu X."/>
            <person name="Cui L."/>
            <person name="Cao Y."/>
        </authorList>
    </citation>
    <scope>FUNCTION</scope>
    <scope>SUBCELLULAR LOCATION</scope>
    <scope>DEVELOPMENTAL STAGE</scope>
    <scope>DISRUPTION PHENOTYPE</scope>
</reference>
<keyword id="KW-1003">Cell membrane</keyword>
<keyword id="KW-0966">Cell projection</keyword>
<keyword id="KW-0969">Cilium</keyword>
<keyword id="KW-0282">Flagellum</keyword>
<keyword id="KW-0325">Glycoprotein</keyword>
<keyword id="KW-0472">Membrane</keyword>
<keyword id="KW-1185">Reference proteome</keyword>
<keyword id="KW-0812">Transmembrane</keyword>
<keyword id="KW-1133">Transmembrane helix</keyword>
<dbReference type="EMBL" id="LK023123">
    <property type="protein sequence ID" value="VUC55291.1"/>
    <property type="molecule type" value="Genomic_DNA"/>
</dbReference>
<dbReference type="RefSeq" id="XP_034421104.1">
    <property type="nucleotide sequence ID" value="XM_034564293.1"/>
</dbReference>
<dbReference type="SMR" id="A0A509AKT6"/>
<dbReference type="GeneID" id="55149203"/>
<dbReference type="VEuPathDB" id="PlasmoDB:PBANKA_0813300"/>
<dbReference type="InParanoid" id="A0A509AKT6"/>
<dbReference type="OMA" id="FQIEPIM"/>
<dbReference type="Proteomes" id="UP000074855">
    <property type="component" value="Chromosome 8"/>
</dbReference>
<dbReference type="GO" id="GO:0031514">
    <property type="term" value="C:motile cilium"/>
    <property type="evidence" value="ECO:0007669"/>
    <property type="project" value="UniProtKB-SubCell"/>
</dbReference>
<dbReference type="GO" id="GO:0005886">
    <property type="term" value="C:plasma membrane"/>
    <property type="evidence" value="ECO:0007669"/>
    <property type="project" value="UniProtKB-SubCell"/>
</dbReference>
<sequence>MIIDLFQSKKLIISIIILILRISLFSCAEHLFFNNNFNFFNFSENNHAKVNELNIDTKYLYQGLRNINIYLALSALNGITKEKINDISQWNGYKTRNNDETNISNVVVTEWKQLNKKSFFLKNNNISNNDNLIKGMPNPYFINSLTEDINNINLYFNIRNDIKYGEIIYKGTYIPHIYNNIFLIFLISYMYWFCIKILFNGYIKGKYVAKEYILKISTLFIFFVILKISLIFLPAILSCIVCLILTFYFYSISMSPCKDIFYLFESTRIKKEPIGWIIIVYAESILIGNVIYNFLCPPKIIIIFIRYIQNDFLVKIICLTIILFISFLIFFLMISNIFPAKKAQNFVFSFTSSYLIVSCFAYFWNIFLLRFLNNTNIFQIEPIMFFSYTPKFVFNRQNMFALFMIFAMSILSIIFPRIKKLKQNIFDMKENIYDSDIDIGKASKNRYNIILNYFT</sequence>
<accession>A0A509AKT6</accession>
<evidence type="ECO:0000255" key="1"/>
<evidence type="ECO:0000255" key="2">
    <source>
        <dbReference type="PROSITE-ProRule" id="PRU00498"/>
    </source>
</evidence>
<evidence type="ECO:0000269" key="3">
    <source>
    </source>
</evidence>
<evidence type="ECO:0000303" key="4">
    <source>
    </source>
</evidence>
<evidence type="ECO:0000305" key="5"/>
<evidence type="ECO:0000312" key="6">
    <source>
        <dbReference type="EMBL" id="VUC55291.1"/>
    </source>
</evidence>
<evidence type="ECO:0000312" key="7">
    <source>
        <dbReference type="Proteomes" id="UP000074855"/>
    </source>
</evidence>
<name>PBS54_PLABA</name>